<organism>
    <name type="scientific">Mus musculus</name>
    <name type="common">Mouse</name>
    <dbReference type="NCBI Taxonomy" id="10090"/>
    <lineage>
        <taxon>Eukaryota</taxon>
        <taxon>Metazoa</taxon>
        <taxon>Chordata</taxon>
        <taxon>Craniata</taxon>
        <taxon>Vertebrata</taxon>
        <taxon>Euteleostomi</taxon>
        <taxon>Mammalia</taxon>
        <taxon>Eutheria</taxon>
        <taxon>Euarchontoglires</taxon>
        <taxon>Glires</taxon>
        <taxon>Rodentia</taxon>
        <taxon>Myomorpha</taxon>
        <taxon>Muroidea</taxon>
        <taxon>Muridae</taxon>
        <taxon>Murinae</taxon>
        <taxon>Mus</taxon>
        <taxon>Mus</taxon>
    </lineage>
</organism>
<dbReference type="EC" id="2.7.10.1"/>
<dbReference type="EMBL" id="X78339">
    <property type="protein sequence ID" value="CAA55135.1"/>
    <property type="molecule type" value="mRNA"/>
</dbReference>
<dbReference type="EMBL" id="U07634">
    <property type="protein sequence ID" value="AAA82113.1"/>
    <property type="molecule type" value="mRNA"/>
</dbReference>
<dbReference type="EMBL" id="AK137704">
    <property type="protein sequence ID" value="BAE23470.1"/>
    <property type="molecule type" value="mRNA"/>
</dbReference>
<dbReference type="EMBL" id="AK144202">
    <property type="protein sequence ID" value="BAE25765.1"/>
    <property type="molecule type" value="mRNA"/>
</dbReference>
<dbReference type="EMBL" id="AL607087">
    <property type="status" value="NOT_ANNOTATED_CDS"/>
    <property type="molecule type" value="Genomic_DNA"/>
</dbReference>
<dbReference type="EMBL" id="AL670285">
    <property type="status" value="NOT_ANNOTATED_CDS"/>
    <property type="molecule type" value="Genomic_DNA"/>
</dbReference>
<dbReference type="EMBL" id="CH466615">
    <property type="protein sequence ID" value="EDL13361.1"/>
    <property type="molecule type" value="Genomic_DNA"/>
</dbReference>
<dbReference type="EMBL" id="BC140960">
    <property type="protein sequence ID" value="AAI40961.1"/>
    <property type="molecule type" value="mRNA"/>
</dbReference>
<dbReference type="EMBL" id="X76010">
    <property type="protein sequence ID" value="CAA53597.1"/>
    <property type="molecule type" value="mRNA"/>
</dbReference>
<dbReference type="EMBL" id="X57243">
    <property type="protein sequence ID" value="CAA40519.1"/>
    <property type="molecule type" value="mRNA"/>
</dbReference>
<dbReference type="CCDS" id="CCDS18869.1"/>
<dbReference type="PIR" id="I48759">
    <property type="entry name" value="I48759"/>
</dbReference>
<dbReference type="PIR" id="I48974">
    <property type="entry name" value="I48974"/>
</dbReference>
<dbReference type="PIR" id="S49004">
    <property type="entry name" value="S49004"/>
</dbReference>
<dbReference type="RefSeq" id="NP_034269.2">
    <property type="nucleotide sequence ID" value="NM_010139.3"/>
</dbReference>
<dbReference type="PDB" id="5ZRX">
    <property type="method" value="X-ray"/>
    <property type="resolution" value="1.50 A"/>
    <property type="chains" value="A/B=900-977"/>
</dbReference>
<dbReference type="PDBsum" id="5ZRX"/>
<dbReference type="SMR" id="Q03145"/>
<dbReference type="BioGRID" id="199469">
    <property type="interactions" value="3"/>
</dbReference>
<dbReference type="CORUM" id="Q03145"/>
<dbReference type="DIP" id="DIP-829N"/>
<dbReference type="FunCoup" id="Q03145">
    <property type="interactions" value="830"/>
</dbReference>
<dbReference type="IntAct" id="Q03145">
    <property type="interactions" value="4"/>
</dbReference>
<dbReference type="MINT" id="Q03145"/>
<dbReference type="STRING" id="10090.ENSMUSP00000006614"/>
<dbReference type="BindingDB" id="Q03145"/>
<dbReference type="ChEMBL" id="CHEMBL4105859"/>
<dbReference type="GuidetoPHARMACOLOGY" id="1822"/>
<dbReference type="GlyCosmos" id="Q03145">
    <property type="glycosylation" value="2 sites, No reported glycans"/>
</dbReference>
<dbReference type="GlyGen" id="Q03145">
    <property type="glycosylation" value="2 sites, 2 N-linked glycans (2 sites)"/>
</dbReference>
<dbReference type="iPTMnet" id="Q03145"/>
<dbReference type="PhosphoSitePlus" id="Q03145"/>
<dbReference type="PaxDb" id="10090-ENSMUSP00000006614"/>
<dbReference type="PeptideAtlas" id="Q03145"/>
<dbReference type="ProteomicsDB" id="275752"/>
<dbReference type="Pumba" id="Q03145"/>
<dbReference type="ABCD" id="Q03145">
    <property type="antibodies" value="37 sequenced antibodies"/>
</dbReference>
<dbReference type="Antibodypedia" id="4183">
    <property type="antibodies" value="1408 antibodies from 47 providers"/>
</dbReference>
<dbReference type="DNASU" id="13836"/>
<dbReference type="Ensembl" id="ENSMUST00000006614.3">
    <property type="protein sequence ID" value="ENSMUSP00000006614.3"/>
    <property type="gene ID" value="ENSMUSG00000006445.4"/>
</dbReference>
<dbReference type="GeneID" id="13836"/>
<dbReference type="KEGG" id="mmu:13836"/>
<dbReference type="UCSC" id="uc008voc.2">
    <property type="organism name" value="mouse"/>
</dbReference>
<dbReference type="AGR" id="MGI:95278"/>
<dbReference type="CTD" id="1969"/>
<dbReference type="MGI" id="MGI:95278">
    <property type="gene designation" value="Epha2"/>
</dbReference>
<dbReference type="VEuPathDB" id="HostDB:ENSMUSG00000006445"/>
<dbReference type="eggNOG" id="KOG0196">
    <property type="taxonomic scope" value="Eukaryota"/>
</dbReference>
<dbReference type="GeneTree" id="ENSGT00940000160786"/>
<dbReference type="HOGENOM" id="CLU_000288_141_0_1"/>
<dbReference type="InParanoid" id="Q03145"/>
<dbReference type="OMA" id="CLECPVH"/>
<dbReference type="OrthoDB" id="4062651at2759"/>
<dbReference type="PhylomeDB" id="Q03145"/>
<dbReference type="TreeFam" id="TF315608"/>
<dbReference type="BRENDA" id="2.7.10.1">
    <property type="organism ID" value="3474"/>
</dbReference>
<dbReference type="Reactome" id="R-MMU-2682334">
    <property type="pathway name" value="EPH-Ephrin signaling"/>
</dbReference>
<dbReference type="Reactome" id="R-MMU-3928663">
    <property type="pathway name" value="EPHA-mediated growth cone collapse"/>
</dbReference>
<dbReference type="Reactome" id="R-MMU-3928665">
    <property type="pathway name" value="EPH-ephrin mediated repulsion of cells"/>
</dbReference>
<dbReference type="Reactome" id="R-MMU-9013149">
    <property type="pathway name" value="RAC1 GTPase cycle"/>
</dbReference>
<dbReference type="Reactome" id="R-MMU-9013404">
    <property type="pathway name" value="RAC2 GTPase cycle"/>
</dbReference>
<dbReference type="Reactome" id="R-MMU-9013408">
    <property type="pathway name" value="RHOG GTPase cycle"/>
</dbReference>
<dbReference type="Reactome" id="R-MMU-9013420">
    <property type="pathway name" value="RHOU GTPase cycle"/>
</dbReference>
<dbReference type="Reactome" id="R-MMU-9013423">
    <property type="pathway name" value="RAC3 GTPase cycle"/>
</dbReference>
<dbReference type="Reactome" id="R-MMU-9013424">
    <property type="pathway name" value="RHOV GTPase cycle"/>
</dbReference>
<dbReference type="Reactome" id="R-MMU-9696264">
    <property type="pathway name" value="RND3 GTPase cycle"/>
</dbReference>
<dbReference type="Reactome" id="R-MMU-9696270">
    <property type="pathway name" value="RND2 GTPase cycle"/>
</dbReference>
<dbReference type="Reactome" id="R-MMU-9696273">
    <property type="pathway name" value="RND1 GTPase cycle"/>
</dbReference>
<dbReference type="BioGRID-ORCS" id="13836">
    <property type="hits" value="1 hit in 80 CRISPR screens"/>
</dbReference>
<dbReference type="ChiTaRS" id="Epha2">
    <property type="organism name" value="mouse"/>
</dbReference>
<dbReference type="PRO" id="PR:Q03145"/>
<dbReference type="Proteomes" id="UP000000589">
    <property type="component" value="Chromosome 4"/>
</dbReference>
<dbReference type="RNAct" id="Q03145">
    <property type="molecule type" value="protein"/>
</dbReference>
<dbReference type="Bgee" id="ENSMUSG00000006445">
    <property type="expression patterns" value="Expressed in neural plate and 154 other cell types or tissues"/>
</dbReference>
<dbReference type="GO" id="GO:0009986">
    <property type="term" value="C:cell surface"/>
    <property type="evidence" value="ECO:0000314"/>
    <property type="project" value="MGI"/>
</dbReference>
<dbReference type="GO" id="GO:0005925">
    <property type="term" value="C:focal adhesion"/>
    <property type="evidence" value="ECO:0000250"/>
    <property type="project" value="UniProtKB"/>
</dbReference>
<dbReference type="GO" id="GO:0030027">
    <property type="term" value="C:lamellipodium"/>
    <property type="evidence" value="ECO:0000250"/>
    <property type="project" value="UniProtKB"/>
</dbReference>
<dbReference type="GO" id="GO:0031258">
    <property type="term" value="C:lamellipodium membrane"/>
    <property type="evidence" value="ECO:0007669"/>
    <property type="project" value="UniProtKB-SubCell"/>
</dbReference>
<dbReference type="GO" id="GO:0031256">
    <property type="term" value="C:leading edge membrane"/>
    <property type="evidence" value="ECO:0000250"/>
    <property type="project" value="UniProtKB"/>
</dbReference>
<dbReference type="GO" id="GO:0005886">
    <property type="term" value="C:plasma membrane"/>
    <property type="evidence" value="ECO:0000250"/>
    <property type="project" value="UniProtKB"/>
</dbReference>
<dbReference type="GO" id="GO:0032587">
    <property type="term" value="C:ruffle membrane"/>
    <property type="evidence" value="ECO:0007669"/>
    <property type="project" value="UniProtKB-SubCell"/>
</dbReference>
<dbReference type="GO" id="GO:0070160">
    <property type="term" value="C:tight junction"/>
    <property type="evidence" value="ECO:0007669"/>
    <property type="project" value="Ensembl"/>
</dbReference>
<dbReference type="GO" id="GO:0005524">
    <property type="term" value="F:ATP binding"/>
    <property type="evidence" value="ECO:0007669"/>
    <property type="project" value="UniProtKB-KW"/>
</dbReference>
<dbReference type="GO" id="GO:0005003">
    <property type="term" value="F:ephrin receptor activity"/>
    <property type="evidence" value="ECO:0007669"/>
    <property type="project" value="InterPro"/>
</dbReference>
<dbReference type="GO" id="GO:0019838">
    <property type="term" value="F:growth factor binding"/>
    <property type="evidence" value="ECO:0007669"/>
    <property type="project" value="Ensembl"/>
</dbReference>
<dbReference type="GO" id="GO:0004714">
    <property type="term" value="F:transmembrane receptor protein tyrosine kinase activity"/>
    <property type="evidence" value="ECO:0000250"/>
    <property type="project" value="UniProtKB"/>
</dbReference>
<dbReference type="GO" id="GO:0090630">
    <property type="term" value="P:activation of GTPase activity"/>
    <property type="evidence" value="ECO:0000250"/>
    <property type="project" value="UniProtKB"/>
</dbReference>
<dbReference type="GO" id="GO:0048320">
    <property type="term" value="P:axial mesoderm formation"/>
    <property type="evidence" value="ECO:0000315"/>
    <property type="project" value="MGI"/>
</dbReference>
<dbReference type="GO" id="GO:0001568">
    <property type="term" value="P:blood vessel development"/>
    <property type="evidence" value="ECO:0000315"/>
    <property type="project" value="MGI"/>
</dbReference>
<dbReference type="GO" id="GO:0002043">
    <property type="term" value="P:blood vessel endothelial cell proliferation involved in sprouting angiogenesis"/>
    <property type="evidence" value="ECO:0000315"/>
    <property type="project" value="MGI"/>
</dbReference>
<dbReference type="GO" id="GO:0048514">
    <property type="term" value="P:blood vessel morphogenesis"/>
    <property type="evidence" value="ECO:0000315"/>
    <property type="project" value="MGI"/>
</dbReference>
<dbReference type="GO" id="GO:0046849">
    <property type="term" value="P:bone remodeling"/>
    <property type="evidence" value="ECO:0000315"/>
    <property type="project" value="UniProtKB"/>
</dbReference>
<dbReference type="GO" id="GO:0060444">
    <property type="term" value="P:branching involved in mammary gland duct morphogenesis"/>
    <property type="evidence" value="ECO:0000315"/>
    <property type="project" value="UniProtKB"/>
</dbReference>
<dbReference type="GO" id="GO:0046058">
    <property type="term" value="P:cAMP metabolic process"/>
    <property type="evidence" value="ECO:0000250"/>
    <property type="project" value="UniProtKB"/>
</dbReference>
<dbReference type="GO" id="GO:0007155">
    <property type="term" value="P:cell adhesion"/>
    <property type="evidence" value="ECO:0007669"/>
    <property type="project" value="UniProtKB-KW"/>
</dbReference>
<dbReference type="GO" id="GO:0060326">
    <property type="term" value="P:cell chemotaxis"/>
    <property type="evidence" value="ECO:0000250"/>
    <property type="project" value="UniProtKB"/>
</dbReference>
<dbReference type="GO" id="GO:0016477">
    <property type="term" value="P:cell migration"/>
    <property type="evidence" value="ECO:0000250"/>
    <property type="project" value="UniProtKB"/>
</dbReference>
<dbReference type="GO" id="GO:0048870">
    <property type="term" value="P:cell motility"/>
    <property type="evidence" value="ECO:0000250"/>
    <property type="project" value="UniProtKB"/>
</dbReference>
<dbReference type="GO" id="GO:0021953">
    <property type="term" value="P:central nervous system neuron differentiation"/>
    <property type="evidence" value="ECO:0000314"/>
    <property type="project" value="MGI"/>
</dbReference>
<dbReference type="GO" id="GO:0050830">
    <property type="term" value="P:defense response to Gram-positive bacterium"/>
    <property type="evidence" value="ECO:0000315"/>
    <property type="project" value="MGI"/>
</dbReference>
<dbReference type="GO" id="GO:0048013">
    <property type="term" value="P:ephrin receptor signaling pathway"/>
    <property type="evidence" value="ECO:0000314"/>
    <property type="project" value="MGI"/>
</dbReference>
<dbReference type="GO" id="GO:0006954">
    <property type="term" value="P:inflammatory response"/>
    <property type="evidence" value="ECO:0000315"/>
    <property type="project" value="MGI"/>
</dbReference>
<dbReference type="GO" id="GO:0008630">
    <property type="term" value="P:intrinsic apoptotic signaling pathway in response to DNA damage"/>
    <property type="evidence" value="ECO:0007669"/>
    <property type="project" value="Ensembl"/>
</dbReference>
<dbReference type="GO" id="GO:0030216">
    <property type="term" value="P:keratinocyte differentiation"/>
    <property type="evidence" value="ECO:0007669"/>
    <property type="project" value="Ensembl"/>
</dbReference>
<dbReference type="GO" id="GO:0070309">
    <property type="term" value="P:lens fiber cell morphogenesis"/>
    <property type="evidence" value="ECO:0000314"/>
    <property type="project" value="UniProtKB"/>
</dbReference>
<dbReference type="GO" id="GO:0033598">
    <property type="term" value="P:mammary gland epithelial cell proliferation"/>
    <property type="evidence" value="ECO:0000315"/>
    <property type="project" value="UniProtKB"/>
</dbReference>
<dbReference type="GO" id="GO:0016525">
    <property type="term" value="P:negative regulation of angiogenesis"/>
    <property type="evidence" value="ECO:0000315"/>
    <property type="project" value="MGI"/>
</dbReference>
<dbReference type="GO" id="GO:0032682">
    <property type="term" value="P:negative regulation of chemokine production"/>
    <property type="evidence" value="ECO:0000315"/>
    <property type="project" value="MGI"/>
</dbReference>
<dbReference type="GO" id="GO:0001818">
    <property type="term" value="P:negative regulation of cytokine production"/>
    <property type="evidence" value="ECO:0000315"/>
    <property type="project" value="MGI"/>
</dbReference>
<dbReference type="GO" id="GO:1901491">
    <property type="term" value="P:negative regulation of lymphangiogenesis"/>
    <property type="evidence" value="ECO:0000315"/>
    <property type="project" value="MGI"/>
</dbReference>
<dbReference type="GO" id="GO:0021915">
    <property type="term" value="P:neural tube development"/>
    <property type="evidence" value="ECO:0000315"/>
    <property type="project" value="MGI"/>
</dbReference>
<dbReference type="GO" id="GO:0060035">
    <property type="term" value="P:notochord cell development"/>
    <property type="evidence" value="ECO:0000315"/>
    <property type="project" value="MGI"/>
</dbReference>
<dbReference type="GO" id="GO:0014028">
    <property type="term" value="P:notochord formation"/>
    <property type="evidence" value="ECO:0000315"/>
    <property type="project" value="MGI"/>
</dbReference>
<dbReference type="GO" id="GO:0048570">
    <property type="term" value="P:notochord morphogenesis"/>
    <property type="evidence" value="ECO:0000315"/>
    <property type="project" value="MGI"/>
</dbReference>
<dbReference type="GO" id="GO:0001649">
    <property type="term" value="P:osteoblast differentiation"/>
    <property type="evidence" value="ECO:0000315"/>
    <property type="project" value="UniProtKB"/>
</dbReference>
<dbReference type="GO" id="GO:0030316">
    <property type="term" value="P:osteoclast differentiation"/>
    <property type="evidence" value="ECO:0000314"/>
    <property type="project" value="UniProtKB"/>
</dbReference>
<dbReference type="GO" id="GO:1904238">
    <property type="term" value="P:pericyte cell differentiation"/>
    <property type="evidence" value="ECO:0000315"/>
    <property type="project" value="MGI"/>
</dbReference>
<dbReference type="GO" id="GO:1903348">
    <property type="term" value="P:positive regulation of bicellular tight junction assembly"/>
    <property type="evidence" value="ECO:0007669"/>
    <property type="project" value="Ensembl"/>
</dbReference>
<dbReference type="GO" id="GO:0030335">
    <property type="term" value="P:positive regulation of cell migration"/>
    <property type="evidence" value="ECO:0007669"/>
    <property type="project" value="Ensembl"/>
</dbReference>
<dbReference type="GO" id="GO:1903078">
    <property type="term" value="P:positive regulation of protein localization to plasma membrane"/>
    <property type="evidence" value="ECO:0000250"/>
    <property type="project" value="UniProtKB"/>
</dbReference>
<dbReference type="GO" id="GO:0036342">
    <property type="term" value="P:post-anal tail morphogenesis"/>
    <property type="evidence" value="ECO:0000315"/>
    <property type="project" value="MGI"/>
</dbReference>
<dbReference type="GO" id="GO:0072659">
    <property type="term" value="P:protein localization to plasma membrane"/>
    <property type="evidence" value="ECO:0007669"/>
    <property type="project" value="Ensembl"/>
</dbReference>
<dbReference type="GO" id="GO:0045765">
    <property type="term" value="P:regulation of angiogenesis"/>
    <property type="evidence" value="ECO:0000314"/>
    <property type="project" value="UniProtKB"/>
</dbReference>
<dbReference type="GO" id="GO:0043535">
    <property type="term" value="P:regulation of blood vessel endothelial cell migration"/>
    <property type="evidence" value="ECO:0000314"/>
    <property type="project" value="UniProtKB"/>
</dbReference>
<dbReference type="GO" id="GO:0033628">
    <property type="term" value="P:regulation of cell adhesion mediated by integrin"/>
    <property type="evidence" value="ECO:0000250"/>
    <property type="project" value="UniProtKB"/>
</dbReference>
<dbReference type="GO" id="GO:0070372">
    <property type="term" value="P:regulation of ERK1 and ERK2 cascade"/>
    <property type="evidence" value="ECO:0007669"/>
    <property type="project" value="Ensembl"/>
</dbReference>
<dbReference type="GO" id="GO:0010591">
    <property type="term" value="P:regulation of lamellipodium assembly"/>
    <property type="evidence" value="ECO:0000250"/>
    <property type="project" value="UniProtKB"/>
</dbReference>
<dbReference type="GO" id="GO:0070848">
    <property type="term" value="P:response to growth factor"/>
    <property type="evidence" value="ECO:0000250"/>
    <property type="project" value="UniProtKB"/>
</dbReference>
<dbReference type="GO" id="GO:0001501">
    <property type="term" value="P:skeletal system development"/>
    <property type="evidence" value="ECO:0000315"/>
    <property type="project" value="MGI"/>
</dbReference>
<dbReference type="GO" id="GO:0001570">
    <property type="term" value="P:vasculogenesis"/>
    <property type="evidence" value="ECO:0000315"/>
    <property type="project" value="MGI"/>
</dbReference>
<dbReference type="CDD" id="cd10480">
    <property type="entry name" value="EphR_LBD_A2"/>
    <property type="match status" value="1"/>
</dbReference>
<dbReference type="CDD" id="cd00063">
    <property type="entry name" value="FN3"/>
    <property type="match status" value="2"/>
</dbReference>
<dbReference type="CDD" id="cd09543">
    <property type="entry name" value="SAM_EPH-A2"/>
    <property type="match status" value="1"/>
</dbReference>
<dbReference type="FunFam" id="1.10.150.50:FF:000029">
    <property type="entry name" value="Ephrin type-A receptor 1"/>
    <property type="match status" value="1"/>
</dbReference>
<dbReference type="FunFam" id="1.20.5.510:FF:000004">
    <property type="entry name" value="Ephrin type-A receptor 2"/>
    <property type="match status" value="1"/>
</dbReference>
<dbReference type="FunFam" id="2.60.120.260:FF:000023">
    <property type="entry name" value="Ephrin type-A receptor 2"/>
    <property type="match status" value="1"/>
</dbReference>
<dbReference type="FunFam" id="2.60.40.10:FF:000724">
    <property type="entry name" value="ephrin type-A receptor 2"/>
    <property type="match status" value="1"/>
</dbReference>
<dbReference type="FunFam" id="2.60.40.1770:FF:000002">
    <property type="entry name" value="ephrin type-A receptor 2"/>
    <property type="match status" value="1"/>
</dbReference>
<dbReference type="FunFam" id="1.10.510.10:FF:000019">
    <property type="entry name" value="Ephrin type-A receptor 5"/>
    <property type="match status" value="1"/>
</dbReference>
<dbReference type="FunFam" id="2.10.50.10:FF:000001">
    <property type="entry name" value="Ephrin type-A receptor 5"/>
    <property type="match status" value="1"/>
</dbReference>
<dbReference type="FunFam" id="3.30.200.20:FF:000001">
    <property type="entry name" value="Ephrin type-A receptor 5"/>
    <property type="match status" value="1"/>
</dbReference>
<dbReference type="FunFam" id="2.60.40.10:FF:000059">
    <property type="entry name" value="Ephrin type-A receptor 6"/>
    <property type="match status" value="1"/>
</dbReference>
<dbReference type="Gene3D" id="2.60.40.1770">
    <property type="entry name" value="ephrin a2 ectodomain"/>
    <property type="match status" value="1"/>
</dbReference>
<dbReference type="Gene3D" id="2.60.120.260">
    <property type="entry name" value="Galactose-binding domain-like"/>
    <property type="match status" value="1"/>
</dbReference>
<dbReference type="Gene3D" id="2.60.40.10">
    <property type="entry name" value="Immunoglobulins"/>
    <property type="match status" value="2"/>
</dbReference>
<dbReference type="Gene3D" id="3.30.200.20">
    <property type="entry name" value="Phosphorylase Kinase, domain 1"/>
    <property type="match status" value="1"/>
</dbReference>
<dbReference type="Gene3D" id="1.20.5.510">
    <property type="entry name" value="Single helix bin"/>
    <property type="match status" value="1"/>
</dbReference>
<dbReference type="Gene3D" id="1.10.150.50">
    <property type="entry name" value="Transcription Factor, Ets-1"/>
    <property type="match status" value="1"/>
</dbReference>
<dbReference type="Gene3D" id="1.10.510.10">
    <property type="entry name" value="Transferase(Phosphotransferase) domain 1"/>
    <property type="match status" value="1"/>
</dbReference>
<dbReference type="Gene3D" id="2.10.50.10">
    <property type="entry name" value="Tumor Necrosis Factor Receptor, subunit A, domain 2"/>
    <property type="match status" value="1"/>
</dbReference>
<dbReference type="InterPro" id="IPR027936">
    <property type="entry name" value="Eph_TM"/>
</dbReference>
<dbReference type="InterPro" id="IPR034263">
    <property type="entry name" value="EphA2_rcpt_lig-bd"/>
</dbReference>
<dbReference type="InterPro" id="IPR001090">
    <property type="entry name" value="Ephrin_rcpt_lig-bd_dom"/>
</dbReference>
<dbReference type="InterPro" id="IPR050449">
    <property type="entry name" value="Ephrin_rcpt_TKs"/>
</dbReference>
<dbReference type="InterPro" id="IPR003961">
    <property type="entry name" value="FN3_dom"/>
</dbReference>
<dbReference type="InterPro" id="IPR036116">
    <property type="entry name" value="FN3_sf"/>
</dbReference>
<dbReference type="InterPro" id="IPR008979">
    <property type="entry name" value="Galactose-bd-like_sf"/>
</dbReference>
<dbReference type="InterPro" id="IPR009030">
    <property type="entry name" value="Growth_fac_rcpt_cys_sf"/>
</dbReference>
<dbReference type="InterPro" id="IPR013783">
    <property type="entry name" value="Ig-like_fold"/>
</dbReference>
<dbReference type="InterPro" id="IPR011009">
    <property type="entry name" value="Kinase-like_dom_sf"/>
</dbReference>
<dbReference type="InterPro" id="IPR000719">
    <property type="entry name" value="Prot_kinase_dom"/>
</dbReference>
<dbReference type="InterPro" id="IPR017441">
    <property type="entry name" value="Protein_kinase_ATP_BS"/>
</dbReference>
<dbReference type="InterPro" id="IPR001660">
    <property type="entry name" value="SAM"/>
</dbReference>
<dbReference type="InterPro" id="IPR013761">
    <property type="entry name" value="SAM/pointed_sf"/>
</dbReference>
<dbReference type="InterPro" id="IPR001245">
    <property type="entry name" value="Ser-Thr/Tyr_kinase_cat_dom"/>
</dbReference>
<dbReference type="InterPro" id="IPR008266">
    <property type="entry name" value="Tyr_kinase_AS"/>
</dbReference>
<dbReference type="InterPro" id="IPR020635">
    <property type="entry name" value="Tyr_kinase_cat_dom"/>
</dbReference>
<dbReference type="InterPro" id="IPR016257">
    <property type="entry name" value="Tyr_kinase_ephrin_rcpt"/>
</dbReference>
<dbReference type="InterPro" id="IPR001426">
    <property type="entry name" value="Tyr_kinase_rcpt_V_CS"/>
</dbReference>
<dbReference type="PANTHER" id="PTHR46877">
    <property type="entry name" value="EPH RECEPTOR A5"/>
    <property type="match status" value="1"/>
</dbReference>
<dbReference type="PANTHER" id="PTHR46877:SF20">
    <property type="entry name" value="RECEPTOR PROTEIN-TYROSINE KINASE"/>
    <property type="match status" value="1"/>
</dbReference>
<dbReference type="Pfam" id="PF14575">
    <property type="entry name" value="EphA2_TM"/>
    <property type="match status" value="1"/>
</dbReference>
<dbReference type="Pfam" id="PF01404">
    <property type="entry name" value="Ephrin_lbd"/>
    <property type="match status" value="1"/>
</dbReference>
<dbReference type="Pfam" id="PF00041">
    <property type="entry name" value="fn3"/>
    <property type="match status" value="2"/>
</dbReference>
<dbReference type="Pfam" id="PF07714">
    <property type="entry name" value="PK_Tyr_Ser-Thr"/>
    <property type="match status" value="1"/>
</dbReference>
<dbReference type="Pfam" id="PF00536">
    <property type="entry name" value="SAM_1"/>
    <property type="match status" value="1"/>
</dbReference>
<dbReference type="PIRSF" id="PIRSF000666">
    <property type="entry name" value="TyrPK_ephrin_receptor"/>
    <property type="match status" value="1"/>
</dbReference>
<dbReference type="PRINTS" id="PR00109">
    <property type="entry name" value="TYRKINASE"/>
</dbReference>
<dbReference type="SMART" id="SM00615">
    <property type="entry name" value="EPH_lbd"/>
    <property type="match status" value="1"/>
</dbReference>
<dbReference type="SMART" id="SM01411">
    <property type="entry name" value="Ephrin_rec_like"/>
    <property type="match status" value="1"/>
</dbReference>
<dbReference type="SMART" id="SM00060">
    <property type="entry name" value="FN3"/>
    <property type="match status" value="2"/>
</dbReference>
<dbReference type="SMART" id="SM00454">
    <property type="entry name" value="SAM"/>
    <property type="match status" value="1"/>
</dbReference>
<dbReference type="SMART" id="SM00219">
    <property type="entry name" value="TyrKc"/>
    <property type="match status" value="1"/>
</dbReference>
<dbReference type="SUPFAM" id="SSF49265">
    <property type="entry name" value="Fibronectin type III"/>
    <property type="match status" value="1"/>
</dbReference>
<dbReference type="SUPFAM" id="SSF49785">
    <property type="entry name" value="Galactose-binding domain-like"/>
    <property type="match status" value="1"/>
</dbReference>
<dbReference type="SUPFAM" id="SSF57184">
    <property type="entry name" value="Growth factor receptor domain"/>
    <property type="match status" value="1"/>
</dbReference>
<dbReference type="SUPFAM" id="SSF56112">
    <property type="entry name" value="Protein kinase-like (PK-like)"/>
    <property type="match status" value="1"/>
</dbReference>
<dbReference type="SUPFAM" id="SSF47769">
    <property type="entry name" value="SAM/Pointed domain"/>
    <property type="match status" value="1"/>
</dbReference>
<dbReference type="PROSITE" id="PS01186">
    <property type="entry name" value="EGF_2"/>
    <property type="match status" value="1"/>
</dbReference>
<dbReference type="PROSITE" id="PS51550">
    <property type="entry name" value="EPH_LBD"/>
    <property type="match status" value="1"/>
</dbReference>
<dbReference type="PROSITE" id="PS50853">
    <property type="entry name" value="FN3"/>
    <property type="match status" value="2"/>
</dbReference>
<dbReference type="PROSITE" id="PS00107">
    <property type="entry name" value="PROTEIN_KINASE_ATP"/>
    <property type="match status" value="1"/>
</dbReference>
<dbReference type="PROSITE" id="PS50011">
    <property type="entry name" value="PROTEIN_KINASE_DOM"/>
    <property type="match status" value="1"/>
</dbReference>
<dbReference type="PROSITE" id="PS00109">
    <property type="entry name" value="PROTEIN_KINASE_TYR"/>
    <property type="match status" value="1"/>
</dbReference>
<dbReference type="PROSITE" id="PS00790">
    <property type="entry name" value="RECEPTOR_TYR_KIN_V_1"/>
    <property type="match status" value="1"/>
</dbReference>
<dbReference type="PROSITE" id="PS00791">
    <property type="entry name" value="RECEPTOR_TYR_KIN_V_2"/>
    <property type="match status" value="1"/>
</dbReference>
<dbReference type="PROSITE" id="PS50105">
    <property type="entry name" value="SAM_DOMAIN"/>
    <property type="match status" value="1"/>
</dbReference>
<evidence type="ECO:0000250" key="1"/>
<evidence type="ECO:0000250" key="2">
    <source>
        <dbReference type="UniProtKB" id="P29317"/>
    </source>
</evidence>
<evidence type="ECO:0000255" key="3"/>
<evidence type="ECO:0000255" key="4">
    <source>
        <dbReference type="PROSITE-ProRule" id="PRU00159"/>
    </source>
</evidence>
<evidence type="ECO:0000255" key="5">
    <source>
        <dbReference type="PROSITE-ProRule" id="PRU00184"/>
    </source>
</evidence>
<evidence type="ECO:0000255" key="6">
    <source>
        <dbReference type="PROSITE-ProRule" id="PRU00316"/>
    </source>
</evidence>
<evidence type="ECO:0000255" key="7">
    <source>
        <dbReference type="PROSITE-ProRule" id="PRU00883"/>
    </source>
</evidence>
<evidence type="ECO:0000255" key="8">
    <source>
        <dbReference type="PROSITE-ProRule" id="PRU10028"/>
    </source>
</evidence>
<evidence type="ECO:0000269" key="9">
    <source>
    </source>
</evidence>
<evidence type="ECO:0000269" key="10">
    <source>
    </source>
</evidence>
<evidence type="ECO:0000269" key="11">
    <source>
    </source>
</evidence>
<evidence type="ECO:0000269" key="12">
    <source>
    </source>
</evidence>
<evidence type="ECO:0000269" key="13">
    <source>
    </source>
</evidence>
<evidence type="ECO:0000269" key="14">
    <source>
    </source>
</evidence>
<evidence type="ECO:0000269" key="15">
    <source>
    </source>
</evidence>
<evidence type="ECO:0000269" key="16">
    <source>
    </source>
</evidence>
<evidence type="ECO:0000269" key="17">
    <source>
    </source>
</evidence>
<evidence type="ECO:0000269" key="18">
    <source>
    </source>
</evidence>
<evidence type="ECO:0000269" key="19">
    <source>
    </source>
</evidence>
<evidence type="ECO:0000269" key="20">
    <source>
    </source>
</evidence>
<evidence type="ECO:0000269" key="21">
    <source>
    </source>
</evidence>
<evidence type="ECO:0000269" key="22">
    <source>
    </source>
</evidence>
<evidence type="ECO:0000269" key="23">
    <source>
    </source>
</evidence>
<evidence type="ECO:0000269" key="24">
    <source>
    </source>
</evidence>
<evidence type="ECO:0000269" key="25">
    <source>
    </source>
</evidence>
<evidence type="ECO:0000305" key="26"/>
<evidence type="ECO:0007744" key="27">
    <source>
        <dbReference type="PDB" id="5ZRX"/>
    </source>
</evidence>
<evidence type="ECO:0007744" key="28">
    <source>
    </source>
</evidence>
<evidence type="ECO:0007829" key="29">
    <source>
        <dbReference type="PDB" id="5ZRX"/>
    </source>
</evidence>
<reference key="1">
    <citation type="journal article" date="1994" name="Oncogene">
        <title>The Eck receptor tyrosine kinase is implicated in pattern formation during gastrulation, hindbrain segmentation and limb development.</title>
        <authorList>
            <person name="Ganju P."/>
            <person name="Shigemoto K."/>
            <person name="Brennan J."/>
            <person name="Entwistle A."/>
            <person name="Reith A.D."/>
        </authorList>
    </citation>
    <scope>NUCLEOTIDE SEQUENCE [MRNA]</scope>
    <scope>GLYCOSYLATION</scope>
    <scope>CATALYTIC ACTIVITY</scope>
    <scope>DEVELOPMENTAL STAGE</scope>
</reference>
<reference key="2">
    <citation type="journal article" date="1994" name="Mech. Dev.">
        <title>The expression of the receptor-protein tyrosine kinase gene, eck, is highly restricted during early mouse development.</title>
        <authorList>
            <person name="Ruiz J.C."/>
            <person name="Robertson E.J."/>
        </authorList>
    </citation>
    <scope>NUCLEOTIDE SEQUENCE [MRNA]</scope>
    <scope>DEVELOPMENTAL STAGE</scope>
</reference>
<reference key="3">
    <citation type="journal article" date="2005" name="Science">
        <title>The transcriptional landscape of the mammalian genome.</title>
        <authorList>
            <person name="Carninci P."/>
            <person name="Kasukawa T."/>
            <person name="Katayama S."/>
            <person name="Gough J."/>
            <person name="Frith M.C."/>
            <person name="Maeda N."/>
            <person name="Oyama R."/>
            <person name="Ravasi T."/>
            <person name="Lenhard B."/>
            <person name="Wells C."/>
            <person name="Kodzius R."/>
            <person name="Shimokawa K."/>
            <person name="Bajic V.B."/>
            <person name="Brenner S.E."/>
            <person name="Batalov S."/>
            <person name="Forrest A.R."/>
            <person name="Zavolan M."/>
            <person name="Davis M.J."/>
            <person name="Wilming L.G."/>
            <person name="Aidinis V."/>
            <person name="Allen J.E."/>
            <person name="Ambesi-Impiombato A."/>
            <person name="Apweiler R."/>
            <person name="Aturaliya R.N."/>
            <person name="Bailey T.L."/>
            <person name="Bansal M."/>
            <person name="Baxter L."/>
            <person name="Beisel K.W."/>
            <person name="Bersano T."/>
            <person name="Bono H."/>
            <person name="Chalk A.M."/>
            <person name="Chiu K.P."/>
            <person name="Choudhary V."/>
            <person name="Christoffels A."/>
            <person name="Clutterbuck D.R."/>
            <person name="Crowe M.L."/>
            <person name="Dalla E."/>
            <person name="Dalrymple B.P."/>
            <person name="de Bono B."/>
            <person name="Della Gatta G."/>
            <person name="di Bernardo D."/>
            <person name="Down T."/>
            <person name="Engstrom P."/>
            <person name="Fagiolini M."/>
            <person name="Faulkner G."/>
            <person name="Fletcher C.F."/>
            <person name="Fukushima T."/>
            <person name="Furuno M."/>
            <person name="Futaki S."/>
            <person name="Gariboldi M."/>
            <person name="Georgii-Hemming P."/>
            <person name="Gingeras T.R."/>
            <person name="Gojobori T."/>
            <person name="Green R.E."/>
            <person name="Gustincich S."/>
            <person name="Harbers M."/>
            <person name="Hayashi Y."/>
            <person name="Hensch T.K."/>
            <person name="Hirokawa N."/>
            <person name="Hill D."/>
            <person name="Huminiecki L."/>
            <person name="Iacono M."/>
            <person name="Ikeo K."/>
            <person name="Iwama A."/>
            <person name="Ishikawa T."/>
            <person name="Jakt M."/>
            <person name="Kanapin A."/>
            <person name="Katoh M."/>
            <person name="Kawasawa Y."/>
            <person name="Kelso J."/>
            <person name="Kitamura H."/>
            <person name="Kitano H."/>
            <person name="Kollias G."/>
            <person name="Krishnan S.P."/>
            <person name="Kruger A."/>
            <person name="Kummerfeld S.K."/>
            <person name="Kurochkin I.V."/>
            <person name="Lareau L.F."/>
            <person name="Lazarevic D."/>
            <person name="Lipovich L."/>
            <person name="Liu J."/>
            <person name="Liuni S."/>
            <person name="McWilliam S."/>
            <person name="Madan Babu M."/>
            <person name="Madera M."/>
            <person name="Marchionni L."/>
            <person name="Matsuda H."/>
            <person name="Matsuzawa S."/>
            <person name="Miki H."/>
            <person name="Mignone F."/>
            <person name="Miyake S."/>
            <person name="Morris K."/>
            <person name="Mottagui-Tabar S."/>
            <person name="Mulder N."/>
            <person name="Nakano N."/>
            <person name="Nakauchi H."/>
            <person name="Ng P."/>
            <person name="Nilsson R."/>
            <person name="Nishiguchi S."/>
            <person name="Nishikawa S."/>
            <person name="Nori F."/>
            <person name="Ohara O."/>
            <person name="Okazaki Y."/>
            <person name="Orlando V."/>
            <person name="Pang K.C."/>
            <person name="Pavan W.J."/>
            <person name="Pavesi G."/>
            <person name="Pesole G."/>
            <person name="Petrovsky N."/>
            <person name="Piazza S."/>
            <person name="Reed J."/>
            <person name="Reid J.F."/>
            <person name="Ring B.Z."/>
            <person name="Ringwald M."/>
            <person name="Rost B."/>
            <person name="Ruan Y."/>
            <person name="Salzberg S.L."/>
            <person name="Sandelin A."/>
            <person name="Schneider C."/>
            <person name="Schoenbach C."/>
            <person name="Sekiguchi K."/>
            <person name="Semple C.A."/>
            <person name="Seno S."/>
            <person name="Sessa L."/>
            <person name="Sheng Y."/>
            <person name="Shibata Y."/>
            <person name="Shimada H."/>
            <person name="Shimada K."/>
            <person name="Silva D."/>
            <person name="Sinclair B."/>
            <person name="Sperling S."/>
            <person name="Stupka E."/>
            <person name="Sugiura K."/>
            <person name="Sultana R."/>
            <person name="Takenaka Y."/>
            <person name="Taki K."/>
            <person name="Tammoja K."/>
            <person name="Tan S.L."/>
            <person name="Tang S."/>
            <person name="Taylor M.S."/>
            <person name="Tegner J."/>
            <person name="Teichmann S.A."/>
            <person name="Ueda H.R."/>
            <person name="van Nimwegen E."/>
            <person name="Verardo R."/>
            <person name="Wei C.L."/>
            <person name="Yagi K."/>
            <person name="Yamanishi H."/>
            <person name="Zabarovsky E."/>
            <person name="Zhu S."/>
            <person name="Zimmer A."/>
            <person name="Hide W."/>
            <person name="Bult C."/>
            <person name="Grimmond S.M."/>
            <person name="Teasdale R.D."/>
            <person name="Liu E.T."/>
            <person name="Brusic V."/>
            <person name="Quackenbush J."/>
            <person name="Wahlestedt C."/>
            <person name="Mattick J.S."/>
            <person name="Hume D.A."/>
            <person name="Kai C."/>
            <person name="Sasaki D."/>
            <person name="Tomaru Y."/>
            <person name="Fukuda S."/>
            <person name="Kanamori-Katayama M."/>
            <person name="Suzuki M."/>
            <person name="Aoki J."/>
            <person name="Arakawa T."/>
            <person name="Iida J."/>
            <person name="Imamura K."/>
            <person name="Itoh M."/>
            <person name="Kato T."/>
            <person name="Kawaji H."/>
            <person name="Kawagashira N."/>
            <person name="Kawashima T."/>
            <person name="Kojima M."/>
            <person name="Kondo S."/>
            <person name="Konno H."/>
            <person name="Nakano K."/>
            <person name="Ninomiya N."/>
            <person name="Nishio T."/>
            <person name="Okada M."/>
            <person name="Plessy C."/>
            <person name="Shibata K."/>
            <person name="Shiraki T."/>
            <person name="Suzuki S."/>
            <person name="Tagami M."/>
            <person name="Waki K."/>
            <person name="Watahiki A."/>
            <person name="Okamura-Oho Y."/>
            <person name="Suzuki H."/>
            <person name="Kawai J."/>
            <person name="Hayashizaki Y."/>
        </authorList>
    </citation>
    <scope>NUCLEOTIDE SEQUENCE [LARGE SCALE MRNA]</scope>
    <source>
        <strain>C57BL/6J</strain>
        <tissue>Bone marrow</tissue>
        <tissue>Vagina</tissue>
    </source>
</reference>
<reference key="4">
    <citation type="journal article" date="2009" name="PLoS Biol.">
        <title>Lineage-specific biology revealed by a finished genome assembly of the mouse.</title>
        <authorList>
            <person name="Church D.M."/>
            <person name="Goodstadt L."/>
            <person name="Hillier L.W."/>
            <person name="Zody M.C."/>
            <person name="Goldstein S."/>
            <person name="She X."/>
            <person name="Bult C.J."/>
            <person name="Agarwala R."/>
            <person name="Cherry J.L."/>
            <person name="DiCuccio M."/>
            <person name="Hlavina W."/>
            <person name="Kapustin Y."/>
            <person name="Meric P."/>
            <person name="Maglott D."/>
            <person name="Birtle Z."/>
            <person name="Marques A.C."/>
            <person name="Graves T."/>
            <person name="Zhou S."/>
            <person name="Teague B."/>
            <person name="Potamousis K."/>
            <person name="Churas C."/>
            <person name="Place M."/>
            <person name="Herschleb J."/>
            <person name="Runnheim R."/>
            <person name="Forrest D."/>
            <person name="Amos-Landgraf J."/>
            <person name="Schwartz D.C."/>
            <person name="Cheng Z."/>
            <person name="Lindblad-Toh K."/>
            <person name="Eichler E.E."/>
            <person name="Ponting C.P."/>
        </authorList>
    </citation>
    <scope>NUCLEOTIDE SEQUENCE [LARGE SCALE GENOMIC DNA]</scope>
    <source>
        <strain>C57BL/6J</strain>
    </source>
</reference>
<reference key="5">
    <citation type="submission" date="2005-07" db="EMBL/GenBank/DDBJ databases">
        <authorList>
            <person name="Mural R.J."/>
            <person name="Adams M.D."/>
            <person name="Myers E.W."/>
            <person name="Smith H.O."/>
            <person name="Venter J.C."/>
        </authorList>
    </citation>
    <scope>NUCLEOTIDE SEQUENCE [LARGE SCALE GENOMIC DNA]</scope>
</reference>
<reference key="6">
    <citation type="journal article" date="2004" name="Genome Res.">
        <title>The status, quality, and expansion of the NIH full-length cDNA project: the Mammalian Gene Collection (MGC).</title>
        <authorList>
            <consortium name="The MGC Project Team"/>
        </authorList>
    </citation>
    <scope>NUCLEOTIDE SEQUENCE [LARGE SCALE MRNA]</scope>
    <source>
        <tissue>Brain</tissue>
    </source>
</reference>
<reference key="7">
    <citation type="journal article" date="1994" name="Mech. Dev.">
        <title>Several receptor tyrosine kinase genes of the Eph family are segmentally expressed in the developing hindbrain.</title>
        <authorList>
            <person name="Becker N."/>
            <person name="Seitanidou T."/>
            <person name="Murphy P."/>
            <person name="Mattei M.-G."/>
            <person name="Topilko P."/>
            <person name="Nieto A."/>
            <person name="Wilkinson D.G."/>
            <person name="Charnay P."/>
            <person name="Gilardi P."/>
        </authorList>
    </citation>
    <scope>NUCLEOTIDE SEQUENCE [MRNA] OF 552-977</scope>
    <scope>DEVELOPMENTAL STAGE</scope>
    <source>
        <strain>C57BL/6J</strain>
        <tissue>Embryo</tissue>
    </source>
</reference>
<reference key="8">
    <citation type="journal article" date="1992" name="Oncogene">
        <title>An Eph-related receptor protein tyrosine kinase gene segmentally expressed in the developing mouse hindbrain.</title>
        <authorList>
            <person name="Gilardi-Hebenstreit P."/>
            <person name="Nieto M.A."/>
            <person name="Frain M."/>
            <person name="Mattei M.-G."/>
            <person name="Chestier A."/>
            <person name="Wilkinson D.G."/>
            <person name="Charnay P."/>
        </authorList>
    </citation>
    <scope>NUCLEOTIDE SEQUENCE [MRNA] OF 742-799</scope>
    <source>
        <tissue>Embryonic brain</tissue>
    </source>
</reference>
<reference key="9">
    <citation type="journal article" date="1995" name="J. Biol. Chem.">
        <title>Characterization of a novel Src-like adapter protein that associates with the Eck receptor tyrosine kinase.</title>
        <authorList>
            <person name="Pandey A."/>
            <person name="Duan H."/>
            <person name="Dixit V.M."/>
        </authorList>
    </citation>
    <scope>INTERACTION WITH SLA</scope>
    <source>
        <tissue>Embryonic brain</tissue>
    </source>
</reference>
<reference key="10">
    <citation type="journal article" date="2001" name="Mech. Dev.">
        <title>Involvement of EphA2 in the formation of the tail notochord via interaction with ephrinA1.</title>
        <authorList>
            <person name="Naruse-Nakajima C."/>
            <person name="Asano M."/>
            <person name="Iwakura Y."/>
        </authorList>
    </citation>
    <scope>DISRUPTION PHENOTYPE</scope>
    <scope>DEVELOPMENTAL STAGE</scope>
    <scope>TISSUE SPECIFICITY</scope>
</reference>
<reference key="11">
    <citation type="journal article" date="2004" name="J. Cell Sci.">
        <title>EphA2 receptor tyrosine kinase regulates endothelial cell migration and vascular assembly through phosphoinositide 3-kinase-mediated Rac1 GTPase activation.</title>
        <authorList>
            <person name="Brantley-Sieders D.M."/>
            <person name="Caughron J."/>
            <person name="Hicks D."/>
            <person name="Pozzi A."/>
            <person name="Ruiz J.C."/>
            <person name="Chen J."/>
        </authorList>
    </citation>
    <scope>FUNCTION IN ANGIOGENESIS</scope>
    <scope>DISRUPTION PHENOTYPE</scope>
</reference>
<reference key="12">
    <citation type="journal article" date="2006" name="Cancer Res.">
        <title>Disruption of EphA2 receptor tyrosine kinase leads to increased susceptibility to carcinogenesis in mouse skin.</title>
        <authorList>
            <person name="Guo H."/>
            <person name="Miao H."/>
            <person name="Gerber L."/>
            <person name="Singh J."/>
            <person name="Denning M.F."/>
            <person name="Gilliam A.C."/>
            <person name="Wang B."/>
        </authorList>
    </citation>
    <scope>FUNCTION IN CELL PROLIFERATION</scope>
    <scope>DISRUPTION PHENOTYPE</scope>
</reference>
<reference key="13">
    <citation type="journal article" date="2006" name="Mol. Cell. Biol.">
        <title>Essential role of Vav family guanine nucleotide exchange factors in EphA receptor-mediated angiogenesis.</title>
        <authorList>
            <person name="Hunter S.G."/>
            <person name="Zhuang G."/>
            <person name="Brantley-Sieders D.M."/>
            <person name="Swat W."/>
            <person name="Cowan C.W."/>
            <person name="Chen J."/>
        </authorList>
    </citation>
    <scope>FUNCTION IN ANGIOGENESIS</scope>
    <scope>INTERACTION WITH VAV2 AND VAV3</scope>
    <scope>MUTAGENESIS OF TYR-589; TYR-595 AND ASP-740</scope>
</reference>
<reference key="14">
    <citation type="journal article" date="2008" name="J. Biol. Chem.">
        <title>Identification and functional analysis of phosphorylated tyrosine residues within EphA2 receptor tyrosine kinase.</title>
        <authorList>
            <person name="Fang W.B."/>
            <person name="Brantley-Sieders D.M."/>
            <person name="Hwang Y."/>
            <person name="Ham A.-J.L."/>
            <person name="Chen J."/>
        </authorList>
    </citation>
    <scope>IDENTIFICATION BY MASS SPECTROMETRY</scope>
    <scope>FUNCTION</scope>
    <scope>INTERACTION WITH VAV2; VAV3 AND PI3-KINASE P85 SUBUNIT</scope>
    <scope>PHOSPHORYLATION AT TYR-589; TYR-595; TYR-736 AND TYR-773</scope>
    <scope>MUTAGENESIS OF TYR-589; TYR-595; TYR-736; TYR-773 AND TYR-931</scope>
</reference>
<reference key="15">
    <citation type="journal article" date="2008" name="Proc. Natl. Acad. Sci. U.S.A.">
        <title>Loss of ephrin-A5 function disrupts lens fiber cell packing and leads to cataract.</title>
        <authorList>
            <person name="Cooper M.A."/>
            <person name="Son A.I."/>
            <person name="Komlos D."/>
            <person name="Sun Y."/>
            <person name="Kleiman N.J."/>
            <person name="Zhou R."/>
        </authorList>
    </citation>
    <scope>FUNCTION IN LENS FIBER CELLS MORPHOGENESIS</scope>
</reference>
<reference key="16">
    <citation type="journal article" date="2009" name="Mol. Cell. Proteomics">
        <title>Large scale localization of protein phosphorylation by use of electron capture dissociation mass spectrometry.</title>
        <authorList>
            <person name="Sweet S.M."/>
            <person name="Bailey C.M."/>
            <person name="Cunningham D.L."/>
            <person name="Heath J.K."/>
            <person name="Cooper H.J."/>
        </authorList>
    </citation>
    <scope>PHOSPHORYLATION [LARGE SCALE ANALYSIS] AT TYR-595 AND TYR-773</scope>
    <scope>IDENTIFICATION BY MASS SPECTROMETRY [LARGE SCALE ANALYSIS]</scope>
    <source>
        <tissue>Embryonic fibroblast</tissue>
    </source>
</reference>
<reference key="17">
    <citation type="journal article" date="2010" name="Cell">
        <title>A tissue-specific atlas of mouse protein phosphorylation and expression.</title>
        <authorList>
            <person name="Huttlin E.L."/>
            <person name="Jedrychowski M.P."/>
            <person name="Elias J.E."/>
            <person name="Goswami T."/>
            <person name="Rad R."/>
            <person name="Beausoleil S.A."/>
            <person name="Villen J."/>
            <person name="Haas W."/>
            <person name="Sowa M.E."/>
            <person name="Gygi S.P."/>
        </authorList>
    </citation>
    <scope>IDENTIFICATION BY MASS SPECTROMETRY [LARGE SCALE ANALYSIS]</scope>
    <source>
        <tissue>Heart</tissue>
        <tissue>Kidney</tissue>
        <tissue>Liver</tissue>
        <tissue>Lung</tissue>
    </source>
</reference>
<reference key="18">
    <citation type="journal article" date="2009" name="J. Biol. Chem.">
        <title>Bidirectional signaling through ephrinA2-EphA2 enhances osteoclastogenesis and suppresses osteoblastogenesis.</title>
        <authorList>
            <person name="Irie N."/>
            <person name="Takada Y."/>
            <person name="Watanabe Y."/>
            <person name="Matsuzaki Y."/>
            <person name="Naruse C."/>
            <person name="Asano M."/>
            <person name="Iwakura Y."/>
            <person name="Suda T."/>
            <person name="Matsuo K."/>
        </authorList>
    </citation>
    <scope>FUNCTION IN BONE IN REMODELING</scope>
</reference>
<reference key="19">
    <citation type="journal article" date="2009" name="Mol. Biol. Cell">
        <title>Regulation of mammary gland branching morphogenesis by EphA2 receptor tyrosine kinase.</title>
        <authorList>
            <person name="Vaught D."/>
            <person name="Chen J."/>
            <person name="Brantley-Sieders D.M."/>
        </authorList>
    </citation>
    <scope>FUNCTION IN MAMMARY GLAND DEVELOPMENT</scope>
</reference>
<reference key="20">
    <citation type="journal article" date="2009" name="Mol. Cell. Proteomics">
        <title>The mouse C2C12 myoblast cell surface N-linked glycoproteome: identification, glycosite occupancy, and membrane orientation.</title>
        <authorList>
            <person name="Gundry R.L."/>
            <person name="Raginski K."/>
            <person name="Tarasova Y."/>
            <person name="Tchernyshyov I."/>
            <person name="Bausch-Fluck D."/>
            <person name="Elliott S.T."/>
            <person name="Boheler K.R."/>
            <person name="Van Eyk J.E."/>
            <person name="Wollscheid B."/>
        </authorList>
    </citation>
    <scope>GLYCOSYLATION [LARGE SCALE ANALYSIS] AT ASN-408 AND ASN-436</scope>
    <source>
        <tissue>Myoblast</tissue>
    </source>
</reference>
<reference key="21">
    <citation type="journal article" date="2009" name="Nat. Biotechnol.">
        <title>Mass-spectrometric identification and relative quantification of N-linked cell surface glycoproteins.</title>
        <authorList>
            <person name="Wollscheid B."/>
            <person name="Bausch-Fluck D."/>
            <person name="Henderson C."/>
            <person name="O'Brien R."/>
            <person name="Bibel M."/>
            <person name="Schiess R."/>
            <person name="Aebersold R."/>
            <person name="Watts J.D."/>
        </authorList>
    </citation>
    <scope>GLYCOSYLATION [LARGE SCALE ANALYSIS] AT ASN-408 AND ASN-436</scope>
</reference>
<reference key="22">
    <citation type="journal article" date="2010" name="Mol. Cell. Biol.">
        <title>The SAM domains of Anks family proteins are critically involved in modulating the degradation of EphA receptors.</title>
        <authorList>
            <person name="Kim J."/>
            <person name="Lee H."/>
            <person name="Kim Y."/>
            <person name="Yoo S."/>
            <person name="Park E."/>
            <person name="Park S."/>
        </authorList>
    </citation>
    <scope>UBIQUITINATION</scope>
    <scope>INTERACTION WITH ANKS1A</scope>
</reference>
<reference key="23">
    <citation type="journal article" date="2016" name="Front. Cell Dev. Biol.">
        <title>Gene expression profiling of muscle stem cells identifies novel regulators of postnatal myogenesis.</title>
        <authorList>
            <person name="Alonso-Martin S."/>
            <person name="Rochat A."/>
            <person name="Mademtzoglou D."/>
            <person name="Morais J."/>
            <person name="de Reynies A."/>
            <person name="Aurade F."/>
            <person name="Chang T.H."/>
            <person name="Zammit P.S."/>
            <person name="Relaix F."/>
        </authorList>
    </citation>
    <scope>DEVELOPMENTAL STAGE</scope>
    <scope>TISSUE SPECIFICITY</scope>
</reference>
<reference evidence="27" key="24">
    <citation type="journal article" date="2018" name="Elife">
        <title>Specific Eph receptor-cytoplasmic effector signaling mediated by SAM-SAM domain interactions.</title>
        <authorList>
            <person name="Wang Y."/>
            <person name="Shang Y."/>
            <person name="Li J."/>
            <person name="Chen W."/>
            <person name="Li G."/>
            <person name="Wan J."/>
            <person name="Liu W."/>
            <person name="Zhang M."/>
        </authorList>
    </citation>
    <scope>X-RAY CRYSTALLOGRAPHY (1.50 ANGSTROMS) OF 900-977 IN COMPLEX WITH INPPL1</scope>
    <scope>FUNCTION</scope>
    <scope>MUTAGENESIS OF LYS-918; LYS-957 AND ARG-958</scope>
</reference>
<comment type="function">
    <text evidence="10 11 12 13 14 15 16 21">Receptor tyrosine kinase which binds promiscuously membrane-bound ephrin-A family ligands residing on adjacent cells, leading to contact-dependent bidirectional signaling into neighboring cells. The signaling pathway downstream of the receptor is referred to as forward signaling while the signaling pathway downstream of the ephrin ligand is referred to as reverse signaling. Activated by the ligand ephrin-A1/EFNA1 regulates migration, integrin-mediated adhesion, proliferation and differentiation of cells (PubMed:29749928). Regulates cell adhesion and differentiation through DSG1/desmoglein-1 and inhibition of the ERK1/ERK2 signaling pathway. May also participate in UV radiation-induced apoptosis and have a ligand-independent stimulatory effect on chemotactic cell migration. During development, may function in distinctive aspects of pattern formation and subsequently in development of several fetal tissues. Involved for instance in angiogenesis, in early hindbrain development and epithelial proliferation and branching morphogenesis during mammary gland development. Engaged by the ligand ephrin-A5/EFNA5 may regulate lens fiber cells shape and interactions and be important for lens transparency development and maintenance. With ephrin-A2/EFNA2 may play a role in bone remodeling through regulation of osteoclastogenesis and osteoblastogenesis.</text>
</comment>
<comment type="catalytic activity">
    <reaction evidence="8 25">
        <text>L-tyrosyl-[protein] + ATP = O-phospho-L-tyrosyl-[protein] + ADP + H(+)</text>
        <dbReference type="Rhea" id="RHEA:10596"/>
        <dbReference type="Rhea" id="RHEA-COMP:10136"/>
        <dbReference type="Rhea" id="RHEA-COMP:20101"/>
        <dbReference type="ChEBI" id="CHEBI:15378"/>
        <dbReference type="ChEBI" id="CHEBI:30616"/>
        <dbReference type="ChEBI" id="CHEBI:46858"/>
        <dbReference type="ChEBI" id="CHEBI:61978"/>
        <dbReference type="ChEBI" id="CHEBI:456216"/>
        <dbReference type="EC" id="2.7.10.1"/>
    </reaction>
</comment>
<comment type="subunit">
    <text evidence="2 11 13 19 21 22">Homodimer. Interacts with INPPL1; regulates activated EPHA2 endocytosis and degradation (PubMed:29749928). Interacts (inactivated form) with PTK2/FAK1 and interacts (EFNA1 ligand-activated form) with PTPN11; regulates integrin-mediated adhesion. Interacts with ARHGEF16, DOCK4 and ELMO2; mediates ligand-independent activation of RAC1 which stimulates cell migration. Interacts with CLDN4; phosphorylates CLDN4 and may regulate tight junctions. Interacts with ACP1. Interacts with CEMIP. Interacts with NCK1; may regulate EPHA2 activity in cell migration and adhesion. Interacts with SLA. Interacts (phosphorylated form) with VAV2, VAV3 and PI3-kinase p85 subunit (PIK3R1, PIK3R2 or PIK3R3); critical for the EFNA1-induced activation of RAC1 which stimulates cell migration. Interacts with ANKS1A. Interacts with TIMD4 (By similarity).</text>
</comment>
<comment type="interaction">
    <interactant intactId="EBI-529701">
        <id>Q03145</id>
    </interactant>
    <interactant intactId="EBI-1539152">
        <id>Q03137</id>
        <label>Epha4</label>
    </interactant>
    <organismsDiffer>false</organismsDiffer>
    <experiments>3</experiments>
</comment>
<comment type="subcellular location">
    <subcellularLocation>
        <location evidence="2">Cell membrane</location>
        <topology evidence="3">Single-pass type I membrane protein</topology>
    </subcellularLocation>
    <subcellularLocation>
        <location evidence="2">Cell projection</location>
        <location evidence="2">Ruffle membrane</location>
        <topology evidence="3">Single-pass type I membrane protein</topology>
    </subcellularLocation>
    <subcellularLocation>
        <location evidence="2">Cell projection</location>
        <location evidence="2">Lamellipodium membrane</location>
        <topology evidence="3">Single-pass type I membrane protein</topology>
    </subcellularLocation>
    <subcellularLocation>
        <location evidence="2">Cell junction</location>
        <location evidence="2">Focal adhesion</location>
    </subcellularLocation>
    <text evidence="2">Present at regions of cell-cell contacts but also at the leading edge of migrating cells. Relocates from the plasma membrane to the cytoplasmic and perinuclear regions in cancer cells.</text>
</comment>
<comment type="tissue specificity">
    <text evidence="9 20">Expressed in the lung, intestine and liver (PubMed:11287184). Expressed in myogenic progenitor cells (PubMed:27446912).</text>
</comment>
<comment type="developmental stage">
    <text evidence="9 20 23 24 25">First detected in gastrulation stage embryos (6.5-7.5 dpc) in ectodermal cells adjacent to the distal region of the primitive streak. By the neural plate stage (approximately 7.5 dpc), EPHA2 expression becomes restricted to the extreme distal end or node of the primitive streak. After the beginning of somitogenesis (approximately 8.0 dpc), expression persists in the node as this structure regresses toward the caudal end of the embryo. In addition, beginning at the mid head fold stage (approximately 7.75 dpc), we observe that EPHA2 exhibits a dynamic and spatially restricted expression pattern in the prospective hindbrain region. EPHA2 transcripts are initially detected in a 5-cell wide strip of mesodermal cells underlying prospective rhombomere 4 (R4). Subsequently at the beginning of somitogenesis, expression is observed in prospective R4. At the 4-8-somite stage, EPHA2 transcripts are observed in R4, mesenchymal cells underlying R4, and surface ectoderm in the vicinity of the developing second branchial arch. By the 10-somite stage, expression in these cells is down-regulated. Additionally, at the 5-8-somite stage, EPHA2 transcripts are detected initially in the lateral mesenchyme immediately underlying the surface ectoderm adjacent to R5 and R6, and subsequently in surface ectoderm overlying the developing third branchial arch. In myogenic progenitor cells, expressed during the acquisition of muscle stem cell properties, from 18.5 dpc to adulthood (PubMed:27446912).</text>
</comment>
<comment type="PTM">
    <text evidence="2 13">Autophosphorylates. Phosphorylated at Ser-898 by PKB; serum-induced phosphorylation which targets EPHA2 to the cell leading edge and stimulates cell migration. Phosphorylation by PKB is inhibited by EFNA1-activated EPHA2 which regulates PKB activity via a reciprocal regulatory loop. Phosphorylated on tyrosine upon binding and activation by EFNA1. Phosphorylated residues Tyr-589 and Tyr-595 are required for binding VAV2 and VAV3 while phosphorylated residues Tyr-736 and Tyr-931 are required for binding PI3-kinase p85 subunit (PIK3R1, PIK3R2 or PIK3R3). These phosphorylated residues are critical for recruitment of VAV2 and VAV3 and PI3-kinase p85 subunit which transduce downstream signaling to activate RAC1 GTPase and cell migration. Dephosphorylation of Tyr-931 by PTPRF prevents the interaction of EPHA2 with NCK1. Phosphorylated at Ser-898 in response to TNF by RPS6KA1 and RPS6KA3; RPS6KA-EPHA2 signaling pathway controls cell migration. Phosphorylated at Ser-898 by PKA; blocks cell retraction induced by EPHA2 kinase activity. Dephosphorylated by ACP1.</text>
</comment>
<comment type="PTM">
    <text evidence="19">Ubiquitinated by CHIP/STUB1. Ubiquitination is regulated by the HSP90 chaperone and regulates the receptor stability and activity through proteasomal degradation. ANKS1A prevents ubiquitination and degradation.</text>
</comment>
<comment type="disruption phenotype">
    <text evidence="9 10 12">Mice are viable, fertile but exhibit aberrant development of tail vertebra and susceptibility to carcinogenesis.</text>
</comment>
<comment type="similarity">
    <text evidence="4">Belongs to the protein kinase superfamily. Tyr protein kinase family. Ephrin receptor subfamily.</text>
</comment>
<name>EPHA2_MOUSE</name>
<protein>
    <recommendedName>
        <fullName>Ephrin type-A receptor 2</fullName>
        <ecNumber>2.7.10.1</ecNumber>
    </recommendedName>
    <alternativeName>
        <fullName>Epithelial cell kinase</fullName>
    </alternativeName>
    <alternativeName>
        <fullName>Tyrosine-protein kinase receptor ECK</fullName>
    </alternativeName>
    <alternativeName>
        <fullName>Tyrosine-protein kinase receptor MPK-5</fullName>
    </alternativeName>
    <alternativeName>
        <fullName>Tyrosine-protein kinase receptor SEK-2</fullName>
    </alternativeName>
</protein>
<keyword id="KW-0002">3D-structure</keyword>
<keyword id="KW-0037">Angiogenesis</keyword>
<keyword id="KW-0053">Apoptosis</keyword>
<keyword id="KW-0067">ATP-binding</keyword>
<keyword id="KW-0130">Cell adhesion</keyword>
<keyword id="KW-0965">Cell junction</keyword>
<keyword id="KW-1003">Cell membrane</keyword>
<keyword id="KW-0966">Cell projection</keyword>
<keyword id="KW-0221">Differentiation</keyword>
<keyword id="KW-1015">Disulfide bond</keyword>
<keyword id="KW-0325">Glycoprotein</keyword>
<keyword id="KW-0418">Kinase</keyword>
<keyword id="KW-0472">Membrane</keyword>
<keyword id="KW-0547">Nucleotide-binding</keyword>
<keyword id="KW-0597">Phosphoprotein</keyword>
<keyword id="KW-0675">Receptor</keyword>
<keyword id="KW-1185">Reference proteome</keyword>
<keyword id="KW-0677">Repeat</keyword>
<keyword id="KW-0732">Signal</keyword>
<keyword id="KW-0808">Transferase</keyword>
<keyword id="KW-0812">Transmembrane</keyword>
<keyword id="KW-1133">Transmembrane helix</keyword>
<keyword id="KW-0829">Tyrosine-protein kinase</keyword>
<keyword id="KW-0832">Ubl conjugation</keyword>
<accession>Q03145</accession>
<accession>Q3UNI2</accession>
<accession>Q60633</accession>
<accession>Q62212</accession>
<sequence length="977" mass="108852">MELRAVGFCLALLWGCALAAAAAQGKEVVLLDFAAMKGELGWLTHPYGKGWDLMQNIMDDMPIYMYSVCNVVSGDQDNWLRTNWVYREEAERIFIELKFTVRDCNSFPGGASSCKETFNLYYAESDVDYGTNFQKRQFTKIDTIAPDEITVSSDFEARNVKLNVEERMVGPLTRKGFYLAFQDIGACVALLSVRVYYKKCPEMLQSLARFPETIAVAVSDTQPLATVAGTCVDHAVVPYGGEGPLMHCTVDGEWLVPIGQCLCQEGYEKVEDACRACSPGFFKSEASESPCLECPEHTLPSTEGATSCQCEEGYFRAPEDPLSMSCTRPPSAPNYLTAIGMGAKVELRWTAPKDTGGRQDIVYSVTCEQCWPESGECGPCEASVRYSEPPHALTRTSVTVSDLEPHMNYTFAVEARNGVSGLVTSRSFRTASVSINQTEPPKVRLEDRSTTSLSVTWSIPVSQQSRVWKYEVTYRKKGDANSYNVRRTEGFSVTLDDLAPDTTYLVQVQALTQEGQGAGSKVHEFQTLSTEGSANMAVIGGVAVGVVLLLVLAGVGLFIHRRRRNLRARQSSEDVRFSKSEQLKPLKTYVDPHTYEDPNQAVLKFTTEIHPSCVARQKVIGAGEFGEVYKGTLKASSGKKEIPVAIKTLKAGYTEKQRVDFLSEASIMGQFSHHNIIRLEGVVSKYKPMMIITEYMENGALDKFLREKDGEFSVLQLVGMLRGIASGMKYLANMNYVHRDLAARNILVNSNLVCKVSDFGLSRVLEDDPEATYTTSGGKIPIRWTAPEAISYRKFTSASDVWSYGIVMWEVMTYGERPYWELSNHEVMKAINDGFRLPTPMDCPSAIYQLMMQCWQQERSRRPKFADIVSILDKLIRAPDSLKTLADFDPRVSIRLPSTSGSEGVPFRTVSEWLESIKMQQYTEHFMVAGYTAIEKVVQMSNEDIKRIGVRLPGHQKRIAYSLLGLKDQVNTVGIPI</sequence>
<proteinExistence type="evidence at protein level"/>
<feature type="signal peptide" evidence="3">
    <location>
        <begin position="1"/>
        <end position="25"/>
    </location>
</feature>
<feature type="chain" id="PRO_0000016801" description="Ephrin type-A receptor 2">
    <location>
        <begin position="26"/>
        <end position="977"/>
    </location>
</feature>
<feature type="topological domain" description="Extracellular" evidence="3">
    <location>
        <begin position="26"/>
        <end position="538"/>
    </location>
</feature>
<feature type="transmembrane region" description="Helical" evidence="3">
    <location>
        <begin position="539"/>
        <end position="559"/>
    </location>
</feature>
<feature type="topological domain" description="Cytoplasmic" evidence="3">
    <location>
        <begin position="560"/>
        <end position="977"/>
    </location>
</feature>
<feature type="domain" description="Eph LBD" evidence="7">
    <location>
        <begin position="27"/>
        <end position="205"/>
    </location>
</feature>
<feature type="domain" description="Fibronectin type-III 1" evidence="6">
    <location>
        <begin position="329"/>
        <end position="433"/>
    </location>
</feature>
<feature type="domain" description="Fibronectin type-III 2" evidence="6">
    <location>
        <begin position="439"/>
        <end position="530"/>
    </location>
</feature>
<feature type="domain" description="Protein kinase" evidence="4">
    <location>
        <begin position="614"/>
        <end position="876"/>
    </location>
</feature>
<feature type="domain" description="SAM" evidence="5">
    <location>
        <begin position="905"/>
        <end position="969"/>
    </location>
</feature>
<feature type="region of interest" description="Mediates interaction with CLDN4" evidence="1">
    <location>
        <begin position="1"/>
        <end position="205"/>
    </location>
</feature>
<feature type="region of interest" description="Mediates interaction with ARHGEF16" evidence="1">
    <location>
        <begin position="607"/>
        <end position="907"/>
    </location>
</feature>
<feature type="region of interest" description="Negatively regulates interaction with ARHGEF16" evidence="1">
    <location>
        <begin position="887"/>
        <end position="977"/>
    </location>
</feature>
<feature type="short sequence motif" description="PDZ-binding" evidence="3">
    <location>
        <begin position="975"/>
        <end position="977"/>
    </location>
</feature>
<feature type="active site" description="Proton acceptor" evidence="4 8">
    <location>
        <position position="740"/>
    </location>
</feature>
<feature type="binding site" evidence="4">
    <location>
        <begin position="620"/>
        <end position="628"/>
    </location>
    <ligand>
        <name>ATP</name>
        <dbReference type="ChEBI" id="CHEBI:30616"/>
    </ligand>
</feature>
<feature type="binding site" evidence="4">
    <location>
        <position position="647"/>
    </location>
    <ligand>
        <name>ATP</name>
        <dbReference type="ChEBI" id="CHEBI:30616"/>
    </ligand>
</feature>
<feature type="modified residue" description="Phosphoserine" evidence="2">
    <location>
        <position position="571"/>
    </location>
</feature>
<feature type="modified residue" description="Phosphoserine" evidence="2">
    <location>
        <position position="580"/>
    </location>
</feature>
<feature type="modified residue" description="Phosphotyrosine; by autocatalysis" evidence="1">
    <location>
        <position position="589"/>
    </location>
</feature>
<feature type="modified residue" description="Phosphotyrosine; by autocatalysis" evidence="13 28">
    <location>
        <position position="595"/>
    </location>
</feature>
<feature type="modified residue" description="Phosphotyrosine" evidence="2">
    <location>
        <position position="629"/>
    </location>
</feature>
<feature type="modified residue" description="Phosphothreonine" evidence="2">
    <location>
        <position position="648"/>
    </location>
</feature>
<feature type="modified residue" description="Phosphotyrosine; by autocatalysis" evidence="13">
    <location>
        <position position="736"/>
    </location>
</feature>
<feature type="modified residue" description="Phosphotyrosine; by autocatalysis" evidence="13 28">
    <location>
        <position position="773"/>
    </location>
</feature>
<feature type="modified residue" description="Phosphoserine" evidence="2">
    <location>
        <position position="870"/>
    </location>
</feature>
<feature type="modified residue" description="Phosphoserine" evidence="2">
    <location>
        <position position="893"/>
    </location>
</feature>
<feature type="modified residue" description="Phosphoserine" evidence="2">
    <location>
        <position position="898"/>
    </location>
</feature>
<feature type="modified residue" description="Phosphoserine" evidence="2">
    <location>
        <position position="902"/>
    </location>
</feature>
<feature type="modified residue" description="Phosphotyrosine; by autocatalysis" evidence="3">
    <location>
        <position position="922"/>
    </location>
</feature>
<feature type="modified residue" description="Phosphotyrosine" evidence="2">
    <location>
        <position position="931"/>
    </location>
</feature>
<feature type="glycosylation site" description="N-linked (GlcNAc...) asparagine" evidence="17 18">
    <location>
        <position position="408"/>
    </location>
</feature>
<feature type="glycosylation site" description="N-linked (GlcNAc...) asparagine" evidence="17 18">
    <location>
        <position position="436"/>
    </location>
</feature>
<feature type="disulfide bond" evidence="1">
    <location>
        <begin position="69"/>
        <end position="187"/>
    </location>
</feature>
<feature type="disulfide bond" evidence="1">
    <location>
        <begin position="104"/>
        <end position="114"/>
    </location>
</feature>
<feature type="mutagenesis site" description="No significant effect on kinase activity and loss of binding to VAV2 and VAV3. Inhibits EFNA1-induced vascular assembly and RAC1 activation in endothelial cells, no significant effect on kinase activity, significant reduction in phosphorylation and binding to VAV3; when associated with E-595." evidence="11 13">
    <original>Y</original>
    <variation>E</variation>
    <location>
        <position position="589"/>
    </location>
</feature>
<feature type="mutagenesis site" description="Inhibits EFNA1-induced vascular assembly and kinase activity." evidence="11 13">
    <original>Y</original>
    <variation>F</variation>
    <location>
        <position position="589"/>
    </location>
</feature>
<feature type="mutagenesis site" description="No significant effect on kinase activity and loss of binding to VAV2 and VAV3. Inhibits EFNA1-induced vascular assembly and RAC1 activation in endothelial cells, no significant effect on kinase activity, significant reduction in phosphorylation and binding to VAV3; when associated with E-589." evidence="11 13">
    <original>Y</original>
    <variation>E</variation>
    <location>
        <position position="595"/>
    </location>
</feature>
<feature type="mutagenesis site" description="Inhibits EFNA1-induced vascular assembly and abolishes kinase activity." evidence="11 13">
    <original>Y</original>
    <variation>F</variation>
    <location>
        <position position="595"/>
    </location>
</feature>
<feature type="mutagenesis site" description="Inhibits EFNA1-induced vascular assembly and RAC1 activation in endothelial cells. No significant effect on kinase activity. Loss of binding to PI3-kinase p85 subunit." evidence="13">
    <original>Y</original>
    <variation>F</variation>
    <location>
        <position position="736"/>
    </location>
</feature>
<feature type="mutagenesis site" description="Loss of kinase activity and binding to VAV3." evidence="11">
    <original>D</original>
    <variation>N</variation>
    <location>
        <position position="740"/>
    </location>
</feature>
<feature type="mutagenesis site" description="No significant effect on kinase activity. Significant reduction in phosphorylation." evidence="13">
    <original>Y</original>
    <variation>F</variation>
    <location>
        <position position="773"/>
    </location>
</feature>
<feature type="mutagenesis site" description="Strongly reduced binding affinity for INPPL1 SAM domain." evidence="21">
    <original>K</original>
    <variation>A</variation>
    <location>
        <position position="918"/>
    </location>
</feature>
<feature type="mutagenesis site" description="Inhibits EFNA1-induced vascular assembly and RAC1 activation in endothelial cells. Inhibits kinase activity. Loss of binding to VAV3 and PI3-kinase p85 subunit." evidence="13">
    <original>Y</original>
    <variation>F</variation>
    <location>
        <position position="931"/>
    </location>
</feature>
<feature type="mutagenesis site" description="Strongly reduced binding affinity for INPPL1 SAM domain." evidence="21">
    <original>K</original>
    <variation>A</variation>
    <location>
        <position position="957"/>
    </location>
</feature>
<feature type="mutagenesis site" description="Abolishes interaction with INPPL1 SAM domain." evidence="21">
    <original>R</original>
    <variation>C</variation>
    <variation>K</variation>
    <location>
        <position position="958"/>
    </location>
</feature>
<feature type="sequence conflict" description="In Ref. 1; CAA55135." evidence="26" ref="1">
    <original>A</original>
    <variation>T</variation>
    <location>
        <position position="5"/>
    </location>
</feature>
<feature type="sequence conflict" description="In Ref. 2; AAA82113." evidence="26" ref="2">
    <original>SS</original>
    <variation>HA</variation>
    <location>
        <begin position="112"/>
        <end position="113"/>
    </location>
</feature>
<feature type="sequence conflict" description="In Ref. 2; AAA82113." evidence="26" ref="2">
    <original>A</original>
    <variation>R</variation>
    <location>
        <position position="189"/>
    </location>
</feature>
<feature type="sequence conflict" description="In Ref. 2; AAA82113." evidence="26" ref="2">
    <original>R</original>
    <variation>C</variation>
    <location>
        <position position="209"/>
    </location>
</feature>
<feature type="sequence conflict" description="In Ref. 2; AAA82113." evidence="26" ref="2">
    <original>P</original>
    <variation>A</variation>
    <location>
        <position position="244"/>
    </location>
</feature>
<feature type="sequence conflict" description="In Ref. 2; AAA82113." evidence="26" ref="2">
    <original>IGQ</original>
    <variation>SE</variation>
    <location>
        <begin position="258"/>
        <end position="260"/>
    </location>
</feature>
<feature type="sequence conflict" description="In Ref. 2; AAA82113." evidence="26" ref="2">
    <original>C</original>
    <variation>S</variation>
    <location>
        <position position="291"/>
    </location>
</feature>
<feature type="sequence conflict" description="In Ref. 2; AAA82113." evidence="26" ref="2">
    <original>IG</original>
    <variation>C</variation>
    <location>
        <begin position="339"/>
        <end position="340"/>
    </location>
</feature>
<feature type="sequence conflict" description="In Ref. 2; AAA82113." evidence="26" ref="2">
    <original>WP</original>
    <variation>CA</variation>
    <location>
        <begin position="371"/>
        <end position="372"/>
    </location>
</feature>
<feature type="sequence conflict" description="In Ref. 2; AAA82113." evidence="26" ref="2">
    <original>S</original>
    <variation>T</variation>
    <location>
        <position position="383"/>
    </location>
</feature>
<feature type="sequence conflict" description="In Ref. 2; AAA82113." evidence="26" ref="2">
    <original>W</original>
    <variation>R</variation>
    <location>
        <position position="457"/>
    </location>
</feature>
<feature type="sequence conflict" description="In Ref. 2; AAA82113." evidence="26" ref="2">
    <original>V</original>
    <variation>G</variation>
    <location>
        <position position="485"/>
    </location>
</feature>
<feature type="sequence conflict" description="In Ref. 2; AAA82113." evidence="26" ref="2">
    <original>L</original>
    <variation>W</variation>
    <location>
        <position position="511"/>
    </location>
</feature>
<feature type="sequence conflict" description="In Ref. 2; AAA82113." evidence="26" ref="2">
    <original>A</original>
    <variation>R</variation>
    <location>
        <position position="534"/>
    </location>
</feature>
<feature type="sequence conflict" description="In Ref. 1; CAA55135." evidence="26" ref="1">
    <original>R</original>
    <variation>P</variation>
    <location>
        <position position="678"/>
    </location>
</feature>
<feature type="sequence conflict" description="In Ref. 2; AAA82113." evidence="26" ref="2">
    <original>G</original>
    <variation>A</variation>
    <location>
        <position position="681"/>
    </location>
</feature>
<feature type="sequence conflict" description="In Ref. 2; AAA82113." evidence="26" ref="2">
    <original>YW</original>
    <variation>LL</variation>
    <location>
        <begin position="819"/>
        <end position="820"/>
    </location>
</feature>
<feature type="sequence conflict" description="In Ref. 2; AAA82113." evidence="26" ref="2">
    <original>A</original>
    <variation>R</variation>
    <location>
        <position position="878"/>
    </location>
</feature>
<feature type="sequence conflict" description="In Ref. 2; AAA82113." evidence="26" ref="2">
    <original>MQ</original>
    <variation>IE</variation>
    <location>
        <begin position="919"/>
        <end position="920"/>
    </location>
</feature>
<feature type="helix" evidence="29">
    <location>
        <begin position="910"/>
        <end position="916"/>
    </location>
</feature>
<feature type="helix" evidence="29">
    <location>
        <begin position="920"/>
        <end position="922"/>
    </location>
</feature>
<feature type="helix" evidence="29">
    <location>
        <begin position="923"/>
        <end position="928"/>
    </location>
</feature>
<feature type="helix" evidence="29">
    <location>
        <begin position="934"/>
        <end position="937"/>
    </location>
</feature>
<feature type="helix" evidence="29">
    <location>
        <begin position="942"/>
        <end position="947"/>
    </location>
</feature>
<feature type="helix" evidence="29">
    <location>
        <begin position="953"/>
        <end position="969"/>
    </location>
</feature>
<gene>
    <name type="primary">Epha2</name>
    <name type="synonym">Eck</name>
    <name type="synonym">Myk2</name>
    <name type="synonym">Sek2</name>
</gene>